<accession>A6MM47</accession>
<proteinExistence type="inferred from homology"/>
<geneLocation type="chloroplast"/>
<feature type="chain" id="PRO_0000325997" description="Photosystem I assembly protein Ycf4">
    <location>
        <begin position="1"/>
        <end position="184"/>
    </location>
</feature>
<feature type="transmembrane region" description="Helical" evidence="1">
    <location>
        <begin position="24"/>
        <end position="44"/>
    </location>
</feature>
<feature type="transmembrane region" description="Helical" evidence="1">
    <location>
        <begin position="57"/>
        <end position="77"/>
    </location>
</feature>
<organism>
    <name type="scientific">Buxus microphylla</name>
    <name type="common">Littleleaf boxwood</name>
    <name type="synonym">Japanese boxwood</name>
    <dbReference type="NCBI Taxonomy" id="153571"/>
    <lineage>
        <taxon>Eukaryota</taxon>
        <taxon>Viridiplantae</taxon>
        <taxon>Streptophyta</taxon>
        <taxon>Embryophyta</taxon>
        <taxon>Tracheophyta</taxon>
        <taxon>Spermatophyta</taxon>
        <taxon>Magnoliopsida</taxon>
        <taxon>Buxales</taxon>
        <taxon>Buxaceae</taxon>
        <taxon>Buxus</taxon>
    </lineage>
</organism>
<keyword id="KW-0150">Chloroplast</keyword>
<keyword id="KW-0472">Membrane</keyword>
<keyword id="KW-0602">Photosynthesis</keyword>
<keyword id="KW-0934">Plastid</keyword>
<keyword id="KW-0793">Thylakoid</keyword>
<keyword id="KW-0812">Transmembrane</keyword>
<keyword id="KW-1133">Transmembrane helix</keyword>
<protein>
    <recommendedName>
        <fullName evidence="1">Photosystem I assembly protein Ycf4</fullName>
    </recommendedName>
</protein>
<comment type="function">
    <text evidence="1">Seems to be required for the assembly of the photosystem I complex.</text>
</comment>
<comment type="subcellular location">
    <subcellularLocation>
        <location evidence="1">Plastid</location>
        <location evidence="1">Chloroplast thylakoid membrane</location>
        <topology evidence="1">Multi-pass membrane protein</topology>
    </subcellularLocation>
</comment>
<comment type="similarity">
    <text evidence="1">Belongs to the Ycf4 family.</text>
</comment>
<name>YCF4_BUXMI</name>
<sequence length="184" mass="21539">MSWRSERIWIELIMGSRKTSNFCWAFILFLGSLGFLLVGTSSYIGRNLISLFPSQQIIFFPQGIVMSFYGIAGLFISSYLWCTISWNVGGGYDRFDRKEGRVCIFRWGFPGINRRIFLRFLMRDIQSIRIEVKEGLYPRRVLYMEVRGQGAIPLTRTDENFTPREIEQKAAELAYFLRVPIEVF</sequence>
<evidence type="ECO:0000255" key="1">
    <source>
        <dbReference type="HAMAP-Rule" id="MF_00437"/>
    </source>
</evidence>
<reference key="1">
    <citation type="journal article" date="2007" name="Mol. Phylogenet. Evol.">
        <title>Phylogenetic and evolutionary implications of complete chloroplast genome sequences of four early-diverging angiosperms: Buxus (Buxaceae), Chloranthus (Chloranthaceae), Dioscorea (Dioscoreaceae), and Illicium (Schisandraceae).</title>
        <authorList>
            <person name="Hansen D.R."/>
            <person name="Dastidar S.G."/>
            <person name="Cai Z."/>
            <person name="Penaflor C."/>
            <person name="Kuehl J.V."/>
            <person name="Boore J.L."/>
            <person name="Jansen R.K."/>
        </authorList>
    </citation>
    <scope>NUCLEOTIDE SEQUENCE [LARGE SCALE GENOMIC DNA]</scope>
</reference>
<dbReference type="EMBL" id="EF380351">
    <property type="protein sequence ID" value="ABQ45260.1"/>
    <property type="molecule type" value="Genomic_DNA"/>
</dbReference>
<dbReference type="RefSeq" id="YP_001294195.1">
    <property type="nucleotide sequence ID" value="NC_009599.1"/>
</dbReference>
<dbReference type="GeneID" id="5236874"/>
<dbReference type="GO" id="GO:0009535">
    <property type="term" value="C:chloroplast thylakoid membrane"/>
    <property type="evidence" value="ECO:0007669"/>
    <property type="project" value="UniProtKB-SubCell"/>
</dbReference>
<dbReference type="GO" id="GO:0009522">
    <property type="term" value="C:photosystem I"/>
    <property type="evidence" value="ECO:0007669"/>
    <property type="project" value="InterPro"/>
</dbReference>
<dbReference type="GO" id="GO:0015979">
    <property type="term" value="P:photosynthesis"/>
    <property type="evidence" value="ECO:0007669"/>
    <property type="project" value="UniProtKB-UniRule"/>
</dbReference>
<dbReference type="HAMAP" id="MF_00437">
    <property type="entry name" value="Ycf4"/>
    <property type="match status" value="1"/>
</dbReference>
<dbReference type="InterPro" id="IPR003359">
    <property type="entry name" value="PSI_Ycf4_assembly"/>
</dbReference>
<dbReference type="PANTHER" id="PTHR33288">
    <property type="match status" value="1"/>
</dbReference>
<dbReference type="PANTHER" id="PTHR33288:SF4">
    <property type="entry name" value="PHOTOSYSTEM I ASSEMBLY PROTEIN YCF4"/>
    <property type="match status" value="1"/>
</dbReference>
<dbReference type="Pfam" id="PF02392">
    <property type="entry name" value="Ycf4"/>
    <property type="match status" value="1"/>
</dbReference>
<gene>
    <name evidence="1" type="primary">ycf4</name>
</gene>